<comment type="function">
    <text evidence="1">Involved in the biosynthesis of the osmoprotectant glycine betaine. Catalyzes the irreversible oxidation of betaine aldehyde to the corresponding acid.</text>
</comment>
<comment type="catalytic activity">
    <reaction evidence="1">
        <text>betaine aldehyde + NAD(+) + H2O = glycine betaine + NADH + 2 H(+)</text>
        <dbReference type="Rhea" id="RHEA:15305"/>
        <dbReference type="ChEBI" id="CHEBI:15377"/>
        <dbReference type="ChEBI" id="CHEBI:15378"/>
        <dbReference type="ChEBI" id="CHEBI:15710"/>
        <dbReference type="ChEBI" id="CHEBI:17750"/>
        <dbReference type="ChEBI" id="CHEBI:57540"/>
        <dbReference type="ChEBI" id="CHEBI:57945"/>
        <dbReference type="EC" id="1.2.1.8"/>
    </reaction>
    <physiologicalReaction direction="left-to-right" evidence="1">
        <dbReference type="Rhea" id="RHEA:15306"/>
    </physiologicalReaction>
</comment>
<comment type="cofactor">
    <cofactor evidence="1">
        <name>K(+)</name>
        <dbReference type="ChEBI" id="CHEBI:29103"/>
    </cofactor>
    <text evidence="1">Binds 2 potassium ions per subunit.</text>
</comment>
<comment type="pathway">
    <text evidence="1">Amine and polyamine biosynthesis; betaine biosynthesis via choline pathway; betaine from betaine aldehyde: step 1/1.</text>
</comment>
<comment type="subunit">
    <text evidence="1">Dimer of dimers.</text>
</comment>
<comment type="similarity">
    <text evidence="1">Belongs to the aldehyde dehydrogenase family.</text>
</comment>
<accession>A3NKP8</accession>
<proteinExistence type="inferred from homology"/>
<reference key="1">
    <citation type="journal article" date="2010" name="Genome Biol. Evol.">
        <title>Continuing evolution of Burkholderia mallei through genome reduction and large-scale rearrangements.</title>
        <authorList>
            <person name="Losada L."/>
            <person name="Ronning C.M."/>
            <person name="DeShazer D."/>
            <person name="Woods D."/>
            <person name="Fedorova N."/>
            <person name="Kim H.S."/>
            <person name="Shabalina S.A."/>
            <person name="Pearson T.R."/>
            <person name="Brinkac L."/>
            <person name="Tan P."/>
            <person name="Nandi T."/>
            <person name="Crabtree J."/>
            <person name="Badger J."/>
            <person name="Beckstrom-Sternberg S."/>
            <person name="Saqib M."/>
            <person name="Schutzer S.E."/>
            <person name="Keim P."/>
            <person name="Nierman W.C."/>
        </authorList>
    </citation>
    <scope>NUCLEOTIDE SEQUENCE [LARGE SCALE GENOMIC DNA]</scope>
    <source>
        <strain>668</strain>
    </source>
</reference>
<organism>
    <name type="scientific">Burkholderia pseudomallei (strain 668)</name>
    <dbReference type="NCBI Taxonomy" id="320373"/>
    <lineage>
        <taxon>Bacteria</taxon>
        <taxon>Pseudomonadati</taxon>
        <taxon>Pseudomonadota</taxon>
        <taxon>Betaproteobacteria</taxon>
        <taxon>Burkholderiales</taxon>
        <taxon>Burkholderiaceae</taxon>
        <taxon>Burkholderia</taxon>
        <taxon>pseudomallei group</taxon>
    </lineage>
</organism>
<protein>
    <recommendedName>
        <fullName evidence="1">Betaine aldehyde dehydrogenase</fullName>
        <shortName evidence="1">BADH</shortName>
        <ecNumber evidence="1">1.2.1.8</ecNumber>
    </recommendedName>
</protein>
<keyword id="KW-0479">Metal-binding</keyword>
<keyword id="KW-0520">NAD</keyword>
<keyword id="KW-0521">NADP</keyword>
<keyword id="KW-0558">Oxidation</keyword>
<keyword id="KW-0560">Oxidoreductase</keyword>
<keyword id="KW-0630">Potassium</keyword>
<gene>
    <name evidence="1" type="primary">betB</name>
    <name type="ordered locus">BURPS668_A1924</name>
</gene>
<name>BETB_BURP6</name>
<dbReference type="EC" id="1.2.1.8" evidence="1"/>
<dbReference type="EMBL" id="CP000571">
    <property type="protein sequence ID" value="ABN86741.1"/>
    <property type="molecule type" value="Genomic_DNA"/>
</dbReference>
<dbReference type="RefSeq" id="WP_011853337.1">
    <property type="nucleotide sequence ID" value="NC_009075.1"/>
</dbReference>
<dbReference type="SMR" id="A3NKP8"/>
<dbReference type="KEGG" id="bpd:BURPS668_A1924"/>
<dbReference type="HOGENOM" id="CLU_005391_0_0_4"/>
<dbReference type="UniPathway" id="UPA00529">
    <property type="reaction ID" value="UER00386"/>
</dbReference>
<dbReference type="GO" id="GO:0008802">
    <property type="term" value="F:betaine-aldehyde dehydrogenase (NAD+) activity"/>
    <property type="evidence" value="ECO:0007669"/>
    <property type="project" value="UniProtKB-UniRule"/>
</dbReference>
<dbReference type="GO" id="GO:0046872">
    <property type="term" value="F:metal ion binding"/>
    <property type="evidence" value="ECO:0007669"/>
    <property type="project" value="UniProtKB-KW"/>
</dbReference>
<dbReference type="GO" id="GO:0019285">
    <property type="term" value="P:glycine betaine biosynthetic process from choline"/>
    <property type="evidence" value="ECO:0007669"/>
    <property type="project" value="UniProtKB-UniRule"/>
</dbReference>
<dbReference type="CDD" id="cd07090">
    <property type="entry name" value="ALDH_F9_TMBADH"/>
    <property type="match status" value="1"/>
</dbReference>
<dbReference type="FunFam" id="3.40.309.10:FF:000014">
    <property type="entry name" value="NAD/NADP-dependent betaine aldehyde dehydrogenase"/>
    <property type="match status" value="1"/>
</dbReference>
<dbReference type="FunFam" id="3.40.605.10:FF:000007">
    <property type="entry name" value="NAD/NADP-dependent betaine aldehyde dehydrogenase"/>
    <property type="match status" value="1"/>
</dbReference>
<dbReference type="Gene3D" id="3.40.605.10">
    <property type="entry name" value="Aldehyde Dehydrogenase, Chain A, domain 1"/>
    <property type="match status" value="1"/>
</dbReference>
<dbReference type="Gene3D" id="3.40.309.10">
    <property type="entry name" value="Aldehyde Dehydrogenase, Chain A, domain 2"/>
    <property type="match status" value="1"/>
</dbReference>
<dbReference type="HAMAP" id="MF_00804">
    <property type="entry name" value="BADH"/>
    <property type="match status" value="1"/>
</dbReference>
<dbReference type="InterPro" id="IPR016161">
    <property type="entry name" value="Ald_DH/histidinol_DH"/>
</dbReference>
<dbReference type="InterPro" id="IPR016163">
    <property type="entry name" value="Ald_DH_C"/>
</dbReference>
<dbReference type="InterPro" id="IPR016160">
    <property type="entry name" value="Ald_DH_CS_CYS"/>
</dbReference>
<dbReference type="InterPro" id="IPR029510">
    <property type="entry name" value="Ald_DH_CS_GLU"/>
</dbReference>
<dbReference type="InterPro" id="IPR016162">
    <property type="entry name" value="Ald_DH_N"/>
</dbReference>
<dbReference type="InterPro" id="IPR015590">
    <property type="entry name" value="Aldehyde_DH_dom"/>
</dbReference>
<dbReference type="InterPro" id="IPR011264">
    <property type="entry name" value="BADH"/>
</dbReference>
<dbReference type="NCBIfam" id="TIGR01804">
    <property type="entry name" value="BADH"/>
    <property type="match status" value="1"/>
</dbReference>
<dbReference type="NCBIfam" id="NF009725">
    <property type="entry name" value="PRK13252.1"/>
    <property type="match status" value="1"/>
</dbReference>
<dbReference type="PANTHER" id="PTHR11699">
    <property type="entry name" value="ALDEHYDE DEHYDROGENASE-RELATED"/>
    <property type="match status" value="1"/>
</dbReference>
<dbReference type="Pfam" id="PF00171">
    <property type="entry name" value="Aldedh"/>
    <property type="match status" value="1"/>
</dbReference>
<dbReference type="SUPFAM" id="SSF53720">
    <property type="entry name" value="ALDH-like"/>
    <property type="match status" value="1"/>
</dbReference>
<dbReference type="PROSITE" id="PS00070">
    <property type="entry name" value="ALDEHYDE_DEHYDR_CYS"/>
    <property type="match status" value="1"/>
</dbReference>
<dbReference type="PROSITE" id="PS00687">
    <property type="entry name" value="ALDEHYDE_DEHYDR_GLU"/>
    <property type="match status" value="1"/>
</dbReference>
<feature type="chain" id="PRO_1000047039" description="Betaine aldehyde dehydrogenase">
    <location>
        <begin position="1"/>
        <end position="489"/>
    </location>
</feature>
<feature type="active site" description="Charge relay system" evidence="1">
    <location>
        <position position="162"/>
    </location>
</feature>
<feature type="active site" description="Proton acceptor" evidence="1">
    <location>
        <position position="251"/>
    </location>
</feature>
<feature type="active site" description="Nucleophile" evidence="1">
    <location>
        <position position="285"/>
    </location>
</feature>
<feature type="active site" description="Charge relay system" evidence="1">
    <location>
        <position position="463"/>
    </location>
</feature>
<feature type="binding site" evidence="1">
    <location>
        <position position="26"/>
    </location>
    <ligand>
        <name>K(+)</name>
        <dbReference type="ChEBI" id="CHEBI:29103"/>
        <label>1</label>
    </ligand>
</feature>
<feature type="binding site" evidence="1">
    <location>
        <position position="93"/>
    </location>
    <ligand>
        <name>K(+)</name>
        <dbReference type="ChEBI" id="CHEBI:29103"/>
        <label>1</label>
    </ligand>
</feature>
<feature type="binding site" evidence="1">
    <location>
        <begin position="150"/>
        <end position="152"/>
    </location>
    <ligand>
        <name>NAD(+)</name>
        <dbReference type="ChEBI" id="CHEBI:57540"/>
    </ligand>
</feature>
<feature type="binding site" evidence="1">
    <location>
        <begin position="176"/>
        <end position="179"/>
    </location>
    <ligand>
        <name>NAD(+)</name>
        <dbReference type="ChEBI" id="CHEBI:57540"/>
    </ligand>
</feature>
<feature type="binding site" evidence="1">
    <location>
        <position position="180"/>
    </location>
    <ligand>
        <name>K(+)</name>
        <dbReference type="ChEBI" id="CHEBI:29103"/>
        <label>1</label>
    </ligand>
</feature>
<feature type="binding site" evidence="1">
    <location>
        <begin position="229"/>
        <end position="232"/>
    </location>
    <ligand>
        <name>NAD(+)</name>
        <dbReference type="ChEBI" id="CHEBI:57540"/>
    </ligand>
</feature>
<feature type="binding site" evidence="1">
    <location>
        <position position="245"/>
    </location>
    <ligand>
        <name>K(+)</name>
        <dbReference type="ChEBI" id="CHEBI:29103"/>
        <label>2</label>
    </ligand>
</feature>
<feature type="binding site" evidence="1">
    <location>
        <position position="253"/>
    </location>
    <ligand>
        <name>NAD(+)</name>
        <dbReference type="ChEBI" id="CHEBI:57540"/>
    </ligand>
</feature>
<feature type="binding site" description="covalent" evidence="1">
    <location>
        <position position="285"/>
    </location>
    <ligand>
        <name>NAD(+)</name>
        <dbReference type="ChEBI" id="CHEBI:57540"/>
    </ligand>
</feature>
<feature type="binding site" evidence="1">
    <location>
        <position position="386"/>
    </location>
    <ligand>
        <name>NAD(+)</name>
        <dbReference type="ChEBI" id="CHEBI:57540"/>
    </ligand>
</feature>
<feature type="binding site" evidence="1">
    <location>
        <position position="456"/>
    </location>
    <ligand>
        <name>K(+)</name>
        <dbReference type="ChEBI" id="CHEBI:29103"/>
        <label>2</label>
    </ligand>
</feature>
<feature type="binding site" evidence="1">
    <location>
        <position position="459"/>
    </location>
    <ligand>
        <name>K(+)</name>
        <dbReference type="ChEBI" id="CHEBI:29103"/>
        <label>2</label>
    </ligand>
</feature>
<feature type="site" description="Seems to be a necessary countercharge to the potassium cations" evidence="1">
    <location>
        <position position="247"/>
    </location>
</feature>
<feature type="modified residue" description="Cysteine sulfenic acid (-SOH)" evidence="1">
    <location>
        <position position="285"/>
    </location>
</feature>
<sequence length="489" mass="52172">MSVYGLQRLYIAGAHADATSGKTFDTFDPATGELLARVQQASADDVDRAVASAREGQREWAAMTAMQRSRILRRAVELLRERNNALAELEMRDTGKPIAETRAVDIVTGADVIEYYAGLATAIEGLQVPLRPESFVYTRREPLGVCAGIGAWNYPIQIACWKSAPALAAGNAMIFKPSEVTPLSALKLAEIYTEAGVPAGVFNVVQGDGSVGALLSAHPGIAKVSFTGGVETGKKVMSLAGASSLKEVTMELGGKSPLIVFDDADLDRAADIAVTANFFSAGQVCTNGTRVFVQQAVKDAFVERVLARVARIRAGKPSDPDTNFGPLASAAQLDKVLGYIDSGKAEGAKLLAGGARLVNDHFASGQYVAPTVFGDCRDDMRIVREEIFGPVMSILSFETEDEAIARANATDYGLAAGVVTENLSRAHRAIHRLEAGICWINTWGESPAEMPVGGYKQSGVGRENGITTLEHYTRIKSVQVELGRYQPVF</sequence>
<evidence type="ECO:0000255" key="1">
    <source>
        <dbReference type="HAMAP-Rule" id="MF_00804"/>
    </source>
</evidence>